<proteinExistence type="inferred from homology"/>
<gene>
    <name evidence="1" type="primary">rpmH</name>
    <name evidence="1" type="synonym">rpl34</name>
    <name type="ordered locus">P9211_12701</name>
</gene>
<sequence length="45" mass="5294">MTKRTLGGTSRKRKRVSGFRVRMRTHTGRRVIRARRKKGRSQLAV</sequence>
<name>RL34_PROM4</name>
<comment type="similarity">
    <text evidence="1">Belongs to the bacterial ribosomal protein bL34 family.</text>
</comment>
<feature type="chain" id="PRO_1000196088" description="Large ribosomal subunit protein bL34">
    <location>
        <begin position="1"/>
        <end position="45"/>
    </location>
</feature>
<feature type="region of interest" description="Disordered" evidence="2">
    <location>
        <begin position="1"/>
        <end position="27"/>
    </location>
</feature>
<feature type="compositionally biased region" description="Basic residues" evidence="2">
    <location>
        <begin position="10"/>
        <end position="27"/>
    </location>
</feature>
<dbReference type="EMBL" id="CP000878">
    <property type="protein sequence ID" value="ABX09201.1"/>
    <property type="molecule type" value="Genomic_DNA"/>
</dbReference>
<dbReference type="RefSeq" id="WP_012195822.1">
    <property type="nucleotide sequence ID" value="NC_009976.1"/>
</dbReference>
<dbReference type="SMR" id="A9BBI9"/>
<dbReference type="STRING" id="93059.P9211_12701"/>
<dbReference type="KEGG" id="pmj:P9211_12701"/>
<dbReference type="eggNOG" id="COG0230">
    <property type="taxonomic scope" value="Bacteria"/>
</dbReference>
<dbReference type="HOGENOM" id="CLU_129938_2_1_3"/>
<dbReference type="Proteomes" id="UP000000788">
    <property type="component" value="Chromosome"/>
</dbReference>
<dbReference type="GO" id="GO:1990904">
    <property type="term" value="C:ribonucleoprotein complex"/>
    <property type="evidence" value="ECO:0007669"/>
    <property type="project" value="UniProtKB-KW"/>
</dbReference>
<dbReference type="GO" id="GO:0005840">
    <property type="term" value="C:ribosome"/>
    <property type="evidence" value="ECO:0007669"/>
    <property type="project" value="UniProtKB-KW"/>
</dbReference>
<dbReference type="GO" id="GO:0003735">
    <property type="term" value="F:structural constituent of ribosome"/>
    <property type="evidence" value="ECO:0007669"/>
    <property type="project" value="InterPro"/>
</dbReference>
<dbReference type="GO" id="GO:0006412">
    <property type="term" value="P:translation"/>
    <property type="evidence" value="ECO:0007669"/>
    <property type="project" value="UniProtKB-UniRule"/>
</dbReference>
<dbReference type="Gene3D" id="1.10.287.3980">
    <property type="match status" value="1"/>
</dbReference>
<dbReference type="HAMAP" id="MF_00391">
    <property type="entry name" value="Ribosomal_bL34"/>
    <property type="match status" value="1"/>
</dbReference>
<dbReference type="InterPro" id="IPR000271">
    <property type="entry name" value="Ribosomal_bL34"/>
</dbReference>
<dbReference type="InterPro" id="IPR020939">
    <property type="entry name" value="Ribosomal_bL34_CS"/>
</dbReference>
<dbReference type="NCBIfam" id="TIGR01030">
    <property type="entry name" value="rpmH_bact"/>
    <property type="match status" value="1"/>
</dbReference>
<dbReference type="Pfam" id="PF00468">
    <property type="entry name" value="Ribosomal_L34"/>
    <property type="match status" value="1"/>
</dbReference>
<dbReference type="PROSITE" id="PS00784">
    <property type="entry name" value="RIBOSOMAL_L34"/>
    <property type="match status" value="1"/>
</dbReference>
<evidence type="ECO:0000255" key="1">
    <source>
        <dbReference type="HAMAP-Rule" id="MF_00391"/>
    </source>
</evidence>
<evidence type="ECO:0000256" key="2">
    <source>
        <dbReference type="SAM" id="MobiDB-lite"/>
    </source>
</evidence>
<evidence type="ECO:0000305" key="3"/>
<keyword id="KW-1185">Reference proteome</keyword>
<keyword id="KW-0687">Ribonucleoprotein</keyword>
<keyword id="KW-0689">Ribosomal protein</keyword>
<protein>
    <recommendedName>
        <fullName evidence="1">Large ribosomal subunit protein bL34</fullName>
    </recommendedName>
    <alternativeName>
        <fullName evidence="3">50S ribosomal protein L34</fullName>
    </alternativeName>
</protein>
<organism>
    <name type="scientific">Prochlorococcus marinus (strain MIT 9211)</name>
    <dbReference type="NCBI Taxonomy" id="93059"/>
    <lineage>
        <taxon>Bacteria</taxon>
        <taxon>Bacillati</taxon>
        <taxon>Cyanobacteriota</taxon>
        <taxon>Cyanophyceae</taxon>
        <taxon>Synechococcales</taxon>
        <taxon>Prochlorococcaceae</taxon>
        <taxon>Prochlorococcus</taxon>
    </lineage>
</organism>
<accession>A9BBI9</accession>
<reference key="1">
    <citation type="journal article" date="2007" name="PLoS Genet.">
        <title>Patterns and implications of gene gain and loss in the evolution of Prochlorococcus.</title>
        <authorList>
            <person name="Kettler G.C."/>
            <person name="Martiny A.C."/>
            <person name="Huang K."/>
            <person name="Zucker J."/>
            <person name="Coleman M.L."/>
            <person name="Rodrigue S."/>
            <person name="Chen F."/>
            <person name="Lapidus A."/>
            <person name="Ferriera S."/>
            <person name="Johnson J."/>
            <person name="Steglich C."/>
            <person name="Church G.M."/>
            <person name="Richardson P."/>
            <person name="Chisholm S.W."/>
        </authorList>
    </citation>
    <scope>NUCLEOTIDE SEQUENCE [LARGE SCALE GENOMIC DNA]</scope>
    <source>
        <strain>MIT 9211</strain>
    </source>
</reference>